<organism>
    <name type="scientific">Nautilia profundicola (strain ATCC BAA-1463 / DSM 18972 / AmH)</name>
    <dbReference type="NCBI Taxonomy" id="598659"/>
    <lineage>
        <taxon>Bacteria</taxon>
        <taxon>Pseudomonadati</taxon>
        <taxon>Campylobacterota</taxon>
        <taxon>Epsilonproteobacteria</taxon>
        <taxon>Nautiliales</taxon>
        <taxon>Nautiliaceae</taxon>
        <taxon>Nautilia</taxon>
    </lineage>
</organism>
<protein>
    <recommendedName>
        <fullName evidence="1">Orotidine 5'-phosphate decarboxylase</fullName>
        <ecNumber evidence="1">4.1.1.23</ecNumber>
    </recommendedName>
    <alternativeName>
        <fullName evidence="1">OMP decarboxylase</fullName>
        <shortName evidence="1">OMPDCase</shortName>
        <shortName evidence="1">OMPdecase</shortName>
    </alternativeName>
</protein>
<gene>
    <name evidence="1" type="primary">pyrF</name>
    <name type="ordered locus">NAMH_0054</name>
</gene>
<comment type="function">
    <text evidence="1">Catalyzes the decarboxylation of orotidine 5'-monophosphate (OMP) to uridine 5'-monophosphate (UMP).</text>
</comment>
<comment type="catalytic activity">
    <reaction evidence="1">
        <text>orotidine 5'-phosphate + H(+) = UMP + CO2</text>
        <dbReference type="Rhea" id="RHEA:11596"/>
        <dbReference type="ChEBI" id="CHEBI:15378"/>
        <dbReference type="ChEBI" id="CHEBI:16526"/>
        <dbReference type="ChEBI" id="CHEBI:57538"/>
        <dbReference type="ChEBI" id="CHEBI:57865"/>
        <dbReference type="EC" id="4.1.1.23"/>
    </reaction>
</comment>
<comment type="pathway">
    <text evidence="1">Pyrimidine metabolism; UMP biosynthesis via de novo pathway; UMP from orotate: step 2/2.</text>
</comment>
<comment type="subunit">
    <text evidence="1">Homodimer.</text>
</comment>
<comment type="similarity">
    <text evidence="1">Belongs to the OMP decarboxylase family. Type 1 subfamily.</text>
</comment>
<feature type="chain" id="PRO_1000164578" description="Orotidine 5'-phosphate decarboxylase">
    <location>
        <begin position="1"/>
        <end position="230"/>
    </location>
</feature>
<feature type="active site" description="Proton donor" evidence="1">
    <location>
        <position position="61"/>
    </location>
</feature>
<feature type="binding site" evidence="1">
    <location>
        <position position="8"/>
    </location>
    <ligand>
        <name>substrate</name>
    </ligand>
</feature>
<feature type="binding site" evidence="1">
    <location>
        <position position="32"/>
    </location>
    <ligand>
        <name>substrate</name>
    </ligand>
</feature>
<feature type="binding site" evidence="1">
    <location>
        <begin position="59"/>
        <end position="68"/>
    </location>
    <ligand>
        <name>substrate</name>
    </ligand>
</feature>
<feature type="binding site" evidence="1">
    <location>
        <position position="118"/>
    </location>
    <ligand>
        <name>substrate</name>
    </ligand>
</feature>
<feature type="binding site" evidence="1">
    <location>
        <position position="178"/>
    </location>
    <ligand>
        <name>substrate</name>
    </ligand>
</feature>
<feature type="binding site" evidence="1">
    <location>
        <position position="187"/>
    </location>
    <ligand>
        <name>substrate</name>
    </ligand>
</feature>
<feature type="binding site" evidence="1">
    <location>
        <position position="207"/>
    </location>
    <ligand>
        <name>substrate</name>
    </ligand>
</feature>
<feature type="binding site" evidence="1">
    <location>
        <position position="208"/>
    </location>
    <ligand>
        <name>substrate</name>
    </ligand>
</feature>
<accession>B9L788</accession>
<evidence type="ECO:0000255" key="1">
    <source>
        <dbReference type="HAMAP-Rule" id="MF_01200"/>
    </source>
</evidence>
<name>PYRF_NAUPA</name>
<sequence>MKLCIALDNPSKEENLKLAKELKEYAKELWLKVGFRSYIRDGAEFIKELKLMGYNVFLDLKLYDIPNTMADAAEEIANLGVDMFNVHASAGSIALKTVMQRLEKYEKRPLVLAVTALTSFTDEEFKKIYGDSIENKAKEFAKLSHEAGLDGVVCSAFESKMIKNITDEKFITLTPGIRPFGEDAGDQARVADISLAKEQKVDFIVVGRPIYKDEDPKAKVEKILNKIKEI</sequence>
<proteinExistence type="inferred from homology"/>
<dbReference type="EC" id="4.1.1.23" evidence="1"/>
<dbReference type="EMBL" id="CP001279">
    <property type="protein sequence ID" value="ACM92743.1"/>
    <property type="molecule type" value="Genomic_DNA"/>
</dbReference>
<dbReference type="RefSeq" id="WP_015901795.1">
    <property type="nucleotide sequence ID" value="NC_012115.1"/>
</dbReference>
<dbReference type="SMR" id="B9L788"/>
<dbReference type="STRING" id="598659.NAMH_0054"/>
<dbReference type="KEGG" id="nam:NAMH_0054"/>
<dbReference type="eggNOG" id="COG0284">
    <property type="taxonomic scope" value="Bacteria"/>
</dbReference>
<dbReference type="HOGENOM" id="CLU_067069_1_1_7"/>
<dbReference type="OrthoDB" id="9806203at2"/>
<dbReference type="UniPathway" id="UPA00070">
    <property type="reaction ID" value="UER00120"/>
</dbReference>
<dbReference type="Proteomes" id="UP000000448">
    <property type="component" value="Chromosome"/>
</dbReference>
<dbReference type="GO" id="GO:0005829">
    <property type="term" value="C:cytosol"/>
    <property type="evidence" value="ECO:0007669"/>
    <property type="project" value="TreeGrafter"/>
</dbReference>
<dbReference type="GO" id="GO:0004590">
    <property type="term" value="F:orotidine-5'-phosphate decarboxylase activity"/>
    <property type="evidence" value="ECO:0007669"/>
    <property type="project" value="UniProtKB-UniRule"/>
</dbReference>
<dbReference type="GO" id="GO:0006207">
    <property type="term" value="P:'de novo' pyrimidine nucleobase biosynthetic process"/>
    <property type="evidence" value="ECO:0007669"/>
    <property type="project" value="InterPro"/>
</dbReference>
<dbReference type="GO" id="GO:0044205">
    <property type="term" value="P:'de novo' UMP biosynthetic process"/>
    <property type="evidence" value="ECO:0007669"/>
    <property type="project" value="UniProtKB-UniRule"/>
</dbReference>
<dbReference type="CDD" id="cd04725">
    <property type="entry name" value="OMP_decarboxylase_like"/>
    <property type="match status" value="1"/>
</dbReference>
<dbReference type="Gene3D" id="3.20.20.70">
    <property type="entry name" value="Aldolase class I"/>
    <property type="match status" value="1"/>
</dbReference>
<dbReference type="HAMAP" id="MF_01200_B">
    <property type="entry name" value="OMPdecase_type1_B"/>
    <property type="match status" value="1"/>
</dbReference>
<dbReference type="InterPro" id="IPR013785">
    <property type="entry name" value="Aldolase_TIM"/>
</dbReference>
<dbReference type="InterPro" id="IPR014732">
    <property type="entry name" value="OMPdecase"/>
</dbReference>
<dbReference type="InterPro" id="IPR018089">
    <property type="entry name" value="OMPdecase_AS"/>
</dbReference>
<dbReference type="InterPro" id="IPR047596">
    <property type="entry name" value="OMPdecase_bac"/>
</dbReference>
<dbReference type="InterPro" id="IPR001754">
    <property type="entry name" value="OMPdeCOase_dom"/>
</dbReference>
<dbReference type="InterPro" id="IPR011060">
    <property type="entry name" value="RibuloseP-bd_barrel"/>
</dbReference>
<dbReference type="NCBIfam" id="NF001273">
    <property type="entry name" value="PRK00230.1"/>
    <property type="match status" value="1"/>
</dbReference>
<dbReference type="NCBIfam" id="TIGR01740">
    <property type="entry name" value="pyrF"/>
    <property type="match status" value="1"/>
</dbReference>
<dbReference type="PANTHER" id="PTHR32119">
    <property type="entry name" value="OROTIDINE 5'-PHOSPHATE DECARBOXYLASE"/>
    <property type="match status" value="1"/>
</dbReference>
<dbReference type="PANTHER" id="PTHR32119:SF2">
    <property type="entry name" value="OROTIDINE 5'-PHOSPHATE DECARBOXYLASE"/>
    <property type="match status" value="1"/>
</dbReference>
<dbReference type="Pfam" id="PF00215">
    <property type="entry name" value="OMPdecase"/>
    <property type="match status" value="1"/>
</dbReference>
<dbReference type="SMART" id="SM00934">
    <property type="entry name" value="OMPdecase"/>
    <property type="match status" value="1"/>
</dbReference>
<dbReference type="SUPFAM" id="SSF51366">
    <property type="entry name" value="Ribulose-phoshate binding barrel"/>
    <property type="match status" value="1"/>
</dbReference>
<dbReference type="PROSITE" id="PS00156">
    <property type="entry name" value="OMPDECASE"/>
    <property type="match status" value="1"/>
</dbReference>
<reference key="1">
    <citation type="journal article" date="2009" name="PLoS Genet.">
        <title>Adaptations to submarine hydrothermal environments exemplified by the genome of Nautilia profundicola.</title>
        <authorList>
            <person name="Campbell B.J."/>
            <person name="Smith J.L."/>
            <person name="Hanson T.E."/>
            <person name="Klotz M.G."/>
            <person name="Stein L.Y."/>
            <person name="Lee C.K."/>
            <person name="Wu D."/>
            <person name="Robinson J.M."/>
            <person name="Khouri H.M."/>
            <person name="Eisen J.A."/>
            <person name="Cary S.C."/>
        </authorList>
    </citation>
    <scope>NUCLEOTIDE SEQUENCE [LARGE SCALE GENOMIC DNA]</scope>
    <source>
        <strain>ATCC BAA-1463 / DSM 18972 / AmH</strain>
    </source>
</reference>
<keyword id="KW-0210">Decarboxylase</keyword>
<keyword id="KW-0456">Lyase</keyword>
<keyword id="KW-0665">Pyrimidine biosynthesis</keyword>